<organism>
    <name type="scientific">Homo sapiens</name>
    <name type="common">Human</name>
    <dbReference type="NCBI Taxonomy" id="9606"/>
    <lineage>
        <taxon>Eukaryota</taxon>
        <taxon>Metazoa</taxon>
        <taxon>Chordata</taxon>
        <taxon>Craniata</taxon>
        <taxon>Vertebrata</taxon>
        <taxon>Euteleostomi</taxon>
        <taxon>Mammalia</taxon>
        <taxon>Eutheria</taxon>
        <taxon>Euarchontoglires</taxon>
        <taxon>Primates</taxon>
        <taxon>Haplorrhini</taxon>
        <taxon>Catarrhini</taxon>
        <taxon>Hominidae</taxon>
        <taxon>Homo</taxon>
    </lineage>
</organism>
<gene>
    <name type="primary">KRTAP8-1</name>
    <name type="synonym">KAP8.1</name>
    <name type="synonym">KRTAP8.1</name>
</gene>
<protein>
    <recommendedName>
        <fullName>Keratin-associated protein 8-1</fullName>
    </recommendedName>
    <alternativeName>
        <fullName>High glycine-tyrosine keratin-associated protein 8.1</fullName>
    </alternativeName>
</protein>
<sequence length="63" mass="6826">MLCDNFPGAVFPGCYWGSYGYPLGYSVGCGYGSTYSPVGYGFGYGYNGCGAFGYRRYSPFALY</sequence>
<comment type="function">
    <text>In the hair cortex, hair keratin intermediate filaments are embedded in an interfilamentous matrix, consisting of hair keratin-associated proteins (KRTAP), which are essential for the formation of a rigid and resistant hair shaft through their extensive disulfide bond cross-linking with abundant cysteine residues of hair keratins. The matrix proteins include the high-sulfur and high-glycine-tyrosine keratins.</text>
</comment>
<comment type="subunit">
    <text>Interacts with hair keratins.</text>
</comment>
<comment type="interaction">
    <interactant intactId="EBI-10261141">
        <id>Q8IUC2</id>
    </interactant>
    <interactant intactId="EBI-640741">
        <id>P01023</id>
        <label>A2M</label>
    </interactant>
    <organismsDiffer>false</organismsDiffer>
    <experiments>3</experiments>
</comment>
<comment type="interaction">
    <interactant intactId="EBI-10261141">
        <id>Q8IUC2</id>
    </interactant>
    <interactant intactId="EBI-7451846">
        <id>Q16613</id>
        <label>AANAT</label>
    </interactant>
    <organismsDiffer>false</organismsDiffer>
    <experiments>3</experiments>
</comment>
<comment type="interaction">
    <interactant intactId="EBI-10261141">
        <id>Q8IUC2</id>
    </interactant>
    <interactant intactId="EBI-727098">
        <id>P21549</id>
        <label>AGXT</label>
    </interactant>
    <organismsDiffer>false</organismsDiffer>
    <experiments>3</experiments>
</comment>
<comment type="interaction">
    <interactant intactId="EBI-10261141">
        <id>Q8IUC2</id>
    </interactant>
    <interactant intactId="EBI-12826295">
        <id>P19801</id>
        <label>AOC1</label>
    </interactant>
    <organismsDiffer>false</organismsDiffer>
    <experiments>3</experiments>
</comment>
<comment type="interaction">
    <interactant intactId="EBI-10261141">
        <id>Q8IUC2</id>
    </interactant>
    <interactant intactId="EBI-21535880">
        <id>Q92870-2</id>
        <label>APBB2</label>
    </interactant>
    <organismsDiffer>false</organismsDiffer>
    <experiments>3</experiments>
</comment>
<comment type="interaction">
    <interactant intactId="EBI-10261141">
        <id>Q8IUC2</id>
    </interactant>
    <interactant intactId="EBI-948603">
        <id>Q03989</id>
        <label>ARID5A</label>
    </interactant>
    <organismsDiffer>false</organismsDiffer>
    <experiments>3</experiments>
</comment>
<comment type="interaction">
    <interactant intactId="EBI-10261141">
        <id>Q8IUC2</id>
    </interactant>
    <interactant intactId="EBI-12006308">
        <id>Q7Z3C6-3</id>
        <label>ATG9A</label>
    </interactant>
    <organismsDiffer>false</organismsDiffer>
    <experiments>3</experiments>
</comment>
<comment type="interaction">
    <interactant intactId="EBI-10261141">
        <id>Q8IUC2</id>
    </interactant>
    <interactant intactId="EBI-11954292">
        <id>Q86V38</id>
        <label>ATN1</label>
    </interactant>
    <organismsDiffer>false</organismsDiffer>
    <experiments>3</experiments>
</comment>
<comment type="interaction">
    <interactant intactId="EBI-10261141">
        <id>Q8IUC2</id>
    </interactant>
    <interactant intactId="EBI-930964">
        <id>P54253</id>
        <label>ATXN1</label>
    </interactant>
    <organismsDiffer>false</organismsDiffer>
    <experiments>6</experiments>
</comment>
<comment type="interaction">
    <interactant intactId="EBI-10261141">
        <id>Q8IUC2</id>
    </interactant>
    <interactant intactId="EBI-8624731">
        <id>P0C7T5</id>
        <label>ATXN1L</label>
    </interactant>
    <organismsDiffer>false</organismsDiffer>
    <experiments>3</experiments>
</comment>
<comment type="interaction">
    <interactant intactId="EBI-10261141">
        <id>Q8IUC2</id>
    </interactant>
    <interactant intactId="EBI-11524452">
        <id>Q8N9N5-2</id>
        <label>BANP</label>
    </interactant>
    <organismsDiffer>false</organismsDiffer>
    <experiments>3</experiments>
</comment>
<comment type="interaction">
    <interactant intactId="EBI-10261141">
        <id>Q8IUC2</id>
    </interactant>
    <interactant intactId="EBI-1050106">
        <id>O75934</id>
        <label>BCAS2</label>
    </interactant>
    <organismsDiffer>false</organismsDiffer>
    <experiments>3</experiments>
</comment>
<comment type="interaction">
    <interactant intactId="EBI-10261141">
        <id>Q8IUC2</id>
    </interactant>
    <interactant intactId="EBI-711810">
        <id>O14503</id>
        <label>BHLHE40</label>
    </interactant>
    <organismsDiffer>false</organismsDiffer>
    <experiments>3</experiments>
</comment>
<comment type="interaction">
    <interactant intactId="EBI-10261141">
        <id>Q8IUC2</id>
    </interactant>
    <interactant intactId="EBI-946029">
        <id>Q6P1W5</id>
        <label>C1orf94</label>
    </interactant>
    <organismsDiffer>false</organismsDiffer>
    <experiments>3</experiments>
</comment>
<comment type="interaction">
    <interactant intactId="EBI-10261141">
        <id>Q8IUC2</id>
    </interactant>
    <interactant intactId="EBI-1383687">
        <id>Q9UQM7</id>
        <label>CAMK2A</label>
    </interactant>
    <organismsDiffer>false</organismsDiffer>
    <experiments>3</experiments>
</comment>
<comment type="interaction">
    <interactant intactId="EBI-10261141">
        <id>Q8IUC2</id>
    </interactant>
    <interactant intactId="EBI-12165781">
        <id>Q96LX7-5</id>
        <label>CCDC17</label>
    </interactant>
    <organismsDiffer>false</organismsDiffer>
    <experiments>3</experiments>
</comment>
<comment type="interaction">
    <interactant intactId="EBI-10261141">
        <id>Q8IUC2</id>
    </interactant>
    <interactant intactId="EBI-12010594">
        <id>O75909-2</id>
        <label>CCNK</label>
    </interactant>
    <organismsDiffer>false</organismsDiffer>
    <experiments>3</experiments>
</comment>
<comment type="interaction">
    <interactant intactId="EBI-10261141">
        <id>Q8IUC2</id>
    </interactant>
    <interactant intactId="EBI-9250559">
        <id>P32320</id>
        <label>CDA</label>
    </interactant>
    <organismsDiffer>false</organismsDiffer>
    <experiments>3</experiments>
</comment>
<comment type="interaction">
    <interactant intactId="EBI-10261141">
        <id>Q8IUC2</id>
    </interactant>
    <interactant intactId="EBI-12261896">
        <id>Q5T4B2</id>
        <label>CERCAM</label>
    </interactant>
    <organismsDiffer>false</organismsDiffer>
    <experiments>3</experiments>
</comment>
<comment type="interaction">
    <interactant intactId="EBI-10261141">
        <id>Q8IUC2</id>
    </interactant>
    <interactant intactId="EBI-25837549">
        <id>P28329-3</id>
        <label>CHAT</label>
    </interactant>
    <organismsDiffer>false</organismsDiffer>
    <experiments>3</experiments>
</comment>
<comment type="interaction">
    <interactant intactId="EBI-10261141">
        <id>Q8IUC2</id>
    </interactant>
    <interactant intactId="EBI-12155483">
        <id>Q9H1P6</id>
        <label>CIMIP1</label>
    </interactant>
    <organismsDiffer>false</organismsDiffer>
    <experiments>3</experiments>
</comment>
<comment type="interaction">
    <interactant intactId="EBI-10261141">
        <id>Q8IUC2</id>
    </interactant>
    <interactant intactId="EBI-10192698">
        <id>Q02930-3</id>
        <label>CREB5</label>
    </interactant>
    <organismsDiffer>false</organismsDiffer>
    <experiments>3</experiments>
</comment>
<comment type="interaction">
    <interactant intactId="EBI-10261141">
        <id>Q8IUC2</id>
    </interactant>
    <interactant intactId="EBI-6875961">
        <id>P02489</id>
        <label>CRYAA</label>
    </interactant>
    <organismsDiffer>false</organismsDiffer>
    <experiments>3</experiments>
</comment>
<comment type="interaction">
    <interactant intactId="EBI-10261141">
        <id>Q8IUC2</id>
    </interactant>
    <interactant intactId="EBI-3867333">
        <id>A8MQ03</id>
        <label>CYSRT1</label>
    </interactant>
    <organismsDiffer>false</organismsDiffer>
    <experiments>3</experiments>
</comment>
<comment type="interaction">
    <interactant intactId="EBI-10261141">
        <id>Q8IUC2</id>
    </interactant>
    <interactant intactId="EBI-7875264">
        <id>O75553</id>
        <label>DAB1</label>
    </interactant>
    <organismsDiffer>false</organismsDiffer>
    <experiments>3</experiments>
</comment>
<comment type="interaction">
    <interactant intactId="EBI-10261141">
        <id>Q8IUC2</id>
    </interactant>
    <interactant intactId="EBI-724310">
        <id>Q15038</id>
        <label>DAZAP2</label>
    </interactant>
    <organismsDiffer>false</organismsDiffer>
    <experiments>6</experiments>
</comment>
<comment type="interaction">
    <interactant intactId="EBI-10261141">
        <id>Q8IUC2</id>
    </interactant>
    <interactant intactId="EBI-954466">
        <id>Q96MA1</id>
        <label>DMRTB1</label>
    </interactant>
    <organismsDiffer>false</organismsDiffer>
    <experiments>3</experiments>
</comment>
<comment type="interaction">
    <interactant intactId="EBI-10261141">
        <id>Q8IUC2</id>
    </interactant>
    <interactant intactId="EBI-10968534">
        <id>P50570-2</id>
        <label>DNM2</label>
    </interactant>
    <organismsDiffer>false</organismsDiffer>
    <experiments>3</experiments>
</comment>
<comment type="interaction">
    <interactant intactId="EBI-10261141">
        <id>Q8IUC2</id>
    </interactant>
    <interactant intactId="EBI-740376">
        <id>Q86UW9</id>
        <label>DTX2</label>
    </interactant>
    <organismsDiffer>false</organismsDiffer>
    <experiments>3</experiments>
</comment>
<comment type="interaction">
    <interactant intactId="EBI-10261141">
        <id>Q8IUC2</id>
    </interactant>
    <interactant intactId="EBI-12013806">
        <id>Q6NZ36-4</id>
        <label>FAAP20</label>
    </interactant>
    <organismsDiffer>false</organismsDiffer>
    <experiments>3</experiments>
</comment>
<comment type="interaction">
    <interactant intactId="EBI-10261141">
        <id>Q8IUC2</id>
    </interactant>
    <interactant intactId="EBI-11978259">
        <id>Q92567-2</id>
        <label>FAM168A</label>
    </interactant>
    <organismsDiffer>false</organismsDiffer>
    <experiments>3</experiments>
</comment>
<comment type="interaction">
    <interactant intactId="EBI-10261141">
        <id>Q8IUC2</id>
    </interactant>
    <interactant intactId="EBI-1384254">
        <id>Q86UY5</id>
        <label>FAM83A</label>
    </interactant>
    <organismsDiffer>false</organismsDiffer>
    <experiments>3</experiments>
</comment>
<comment type="interaction">
    <interactant intactId="EBI-10261141">
        <id>Q8IUC2</id>
    </interactant>
    <interactant intactId="EBI-348399">
        <id>P22607</id>
        <label>FGFR3</label>
    </interactant>
    <organismsDiffer>false</organismsDiffer>
    <experiments>3</experiments>
</comment>
<comment type="interaction">
    <interactant intactId="EBI-10261141">
        <id>Q8IUC2</id>
    </interactant>
    <interactant intactId="EBI-17282008">
        <id>O60548</id>
        <label>FOXD2</label>
    </interactant>
    <organismsDiffer>false</organismsDiffer>
    <experiments>3</experiments>
</comment>
<comment type="interaction">
    <interactant intactId="EBI-10261141">
        <id>Q8IUC2</id>
    </interactant>
    <interactant intactId="EBI-983719">
        <id>Q9BZS1</id>
        <label>FOXP3</label>
    </interactant>
    <organismsDiffer>false</organismsDiffer>
    <experiments>3</experiments>
</comment>
<comment type="interaction">
    <interactant intactId="EBI-10261141">
        <id>Q8IUC2</id>
    </interactant>
    <interactant intactId="EBI-2806671">
        <id>P23769</id>
        <label>GATA2</label>
    </interactant>
    <organismsDiffer>false</organismsDiffer>
    <experiments>3</experiments>
</comment>
<comment type="interaction">
    <interactant intactId="EBI-10261141">
        <id>Q8IUC2</id>
    </interactant>
    <interactant intactId="EBI-10188645">
        <id>O75603</id>
        <label>GCM2</label>
    </interactant>
    <organismsDiffer>false</organismsDiffer>
    <experiments>3</experiments>
</comment>
<comment type="interaction">
    <interactant intactId="EBI-10261141">
        <id>Q8IUC2</id>
    </interactant>
    <interactant intactId="EBI-11110431">
        <id>Q8TB36</id>
        <label>GDAP1</label>
    </interactant>
    <organismsDiffer>false</organismsDiffer>
    <experiments>3</experiments>
</comment>
<comment type="interaction">
    <interactant intactId="EBI-10261141">
        <id>Q8IUC2</id>
    </interactant>
    <interactant intactId="EBI-7251368">
        <id>Q9BZE0</id>
        <label>GLIS2</label>
    </interactant>
    <organismsDiffer>false</organismsDiffer>
    <experiments>3</experiments>
</comment>
<comment type="interaction">
    <interactant intactId="EBI-10261141">
        <id>Q8IUC2</id>
    </interactant>
    <interactant intactId="EBI-747754">
        <id>P28799</id>
        <label>GRN</label>
    </interactant>
    <organismsDiffer>false</organismsDiffer>
    <experiments>3</experiments>
</comment>
<comment type="interaction">
    <interactant intactId="EBI-10261141">
        <id>Q8IUC2</id>
    </interactant>
    <interactant intactId="EBI-10178933">
        <id>V9HW27</id>
        <label>HEL-S-101</label>
    </interactant>
    <organismsDiffer>false</organismsDiffer>
    <experiments>3</experiments>
</comment>
<comment type="interaction">
    <interactant intactId="EBI-10261141">
        <id>Q8IUC2</id>
    </interactant>
    <interactant intactId="EBI-750630">
        <id>Q9UBP5</id>
        <label>HEY2</label>
    </interactant>
    <organismsDiffer>false</organismsDiffer>
    <experiments>3</experiments>
</comment>
<comment type="interaction">
    <interactant intactId="EBI-10261141">
        <id>Q8IUC2</id>
    </interactant>
    <interactant intactId="EBI-1752118">
        <id>P31273</id>
        <label>HOXC8</label>
    </interactant>
    <organismsDiffer>false</organismsDiffer>
    <experiments>3</experiments>
</comment>
<comment type="interaction">
    <interactant intactId="EBI-10261141">
        <id>Q8IUC2</id>
    </interactant>
    <interactant intactId="EBI-352682">
        <id>P04792</id>
        <label>HSPB1</label>
    </interactant>
    <organismsDiffer>false</organismsDiffer>
    <experiments>3</experiments>
</comment>
<comment type="interaction">
    <interactant intactId="EBI-10261141">
        <id>Q8IUC2</id>
    </interactant>
    <interactant intactId="EBI-466029">
        <id>P42858</id>
        <label>HTT</label>
    </interactant>
    <organismsDiffer>false</organismsDiffer>
    <experiments>6</experiments>
</comment>
<comment type="interaction">
    <interactant intactId="EBI-10261141">
        <id>Q8IUC2</id>
    </interactant>
    <interactant intactId="EBI-10975473">
        <id>O60333-2</id>
        <label>KIF1B</label>
    </interactant>
    <organismsDiffer>false</organismsDiffer>
    <experiments>3</experiments>
</comment>
<comment type="interaction">
    <interactant intactId="EBI-10261141">
        <id>Q8IUC2</id>
    </interactant>
    <interactant intactId="EBI-2432309">
        <id>Q92876</id>
        <label>KLK6</label>
    </interactant>
    <organismsDiffer>false</organismsDiffer>
    <experiments>3</experiments>
</comment>
<comment type="interaction">
    <interactant intactId="EBI-10261141">
        <id>Q8IUC2</id>
    </interactant>
    <interactant intactId="EBI-10176396">
        <id>P60329</id>
        <label>KRTAP12-4</label>
    </interactant>
    <organismsDiffer>false</organismsDiffer>
    <experiments>3</experiments>
</comment>
<comment type="interaction">
    <interactant intactId="EBI-10261141">
        <id>Q8IUC2</id>
    </interactant>
    <interactant intactId="EBI-1048945">
        <id>Q3LI72</id>
        <label>KRTAP19-5</label>
    </interactant>
    <organismsDiffer>false</organismsDiffer>
    <experiments>3</experiments>
</comment>
<comment type="interaction">
    <interactant intactId="EBI-10261141">
        <id>Q8IUC2</id>
    </interactant>
    <interactant intactId="EBI-3957672">
        <id>Q6PEX3</id>
        <label>KRTAP26-1</label>
    </interactant>
    <organismsDiffer>false</organismsDiffer>
    <experiments>3</experiments>
</comment>
<comment type="interaction">
    <interactant intactId="EBI-10261141">
        <id>Q8IUC2</id>
    </interactant>
    <interactant intactId="EBI-1189067">
        <id>P51608</id>
        <label>MECP2</label>
    </interactant>
    <organismsDiffer>false</organismsDiffer>
    <experiments>3</experiments>
</comment>
<comment type="interaction">
    <interactant intactId="EBI-10261141">
        <id>Q8IUC2</id>
    </interactant>
    <interactant intactId="EBI-12120958">
        <id>Q14CX5</id>
        <label>MFSD13A</label>
    </interactant>
    <organismsDiffer>false</organismsDiffer>
    <experiments>3</experiments>
</comment>
<comment type="interaction">
    <interactant intactId="EBI-10261141">
        <id>Q8IUC2</id>
    </interactant>
    <interactant intactId="EBI-2340269">
        <id>Q13064</id>
        <label>MKRN3</label>
    </interactant>
    <organismsDiffer>false</organismsDiffer>
    <experiments>3</experiments>
</comment>
<comment type="interaction">
    <interactant intactId="EBI-10261141">
        <id>Q8IUC2</id>
    </interactant>
    <interactant intactId="EBI-5662487">
        <id>Q8TDC0</id>
        <label>MYOZ3</label>
    </interactant>
    <organismsDiffer>false</organismsDiffer>
    <experiments>5</experiments>
</comment>
<comment type="interaction">
    <interactant intactId="EBI-10261141">
        <id>Q8IUC2</id>
    </interactant>
    <interactant intactId="EBI-475646">
        <id>P07196</id>
        <label>NEFL</label>
    </interactant>
    <organismsDiffer>false</organismsDiffer>
    <experiments>3</experiments>
</comment>
<comment type="interaction">
    <interactant intactId="EBI-10261141">
        <id>Q8IUC2</id>
    </interactant>
    <interactant intactId="EBI-936601">
        <id>P52952</id>
        <label>NKX2-5</label>
    </interactant>
    <organismsDiffer>false</organismsDiffer>
    <experiments>3</experiments>
</comment>
<comment type="interaction">
    <interactant intactId="EBI-10261141">
        <id>Q8IUC2</id>
    </interactant>
    <interactant intactId="EBI-12025760">
        <id>Q86UR1-2</id>
        <label>NOXA1</label>
    </interactant>
    <organismsDiffer>false</organismsDiffer>
    <experiments>3</experiments>
</comment>
<comment type="interaction">
    <interactant intactId="EBI-10261141">
        <id>Q8IUC2</id>
    </interactant>
    <interactant intactId="EBI-10181968">
        <id>Q7Z4N8</id>
        <label>P4HA3</label>
    </interactant>
    <organismsDiffer>false</organismsDiffer>
    <experiments>3</experiments>
</comment>
<comment type="interaction">
    <interactant intactId="EBI-10261141">
        <id>Q8IUC2</id>
    </interactant>
    <interactant intactId="EBI-12105196">
        <id>P23760-8</id>
        <label>PAX3</label>
    </interactant>
    <organismsDiffer>false</organismsDiffer>
    <experiments>3</experiments>
</comment>
<comment type="interaction">
    <interactant intactId="EBI-10261141">
        <id>Q8IUC2</id>
    </interactant>
    <interactant intactId="EBI-752057">
        <id>Q7Z412</id>
        <label>PEX26</label>
    </interactant>
    <organismsDiffer>false</organismsDiffer>
    <experiments>3</experiments>
</comment>
<comment type="interaction">
    <interactant intactId="EBI-10261141">
        <id>Q8IUC2</id>
    </interactant>
    <interactant intactId="EBI-748265">
        <id>P78337</id>
        <label>PITX1</label>
    </interactant>
    <organismsDiffer>false</organismsDiffer>
    <experiments>3</experiments>
</comment>
<comment type="interaction">
    <interactant intactId="EBI-10261141">
        <id>Q8IUC2</id>
    </interactant>
    <interactant intactId="EBI-769257">
        <id>Q9NRQ2</id>
        <label>PLSCR4</label>
    </interactant>
    <organismsDiffer>false</organismsDiffer>
    <experiments>3</experiments>
</comment>
<comment type="interaction">
    <interactant intactId="EBI-10261141">
        <id>Q8IUC2</id>
    </interactant>
    <interactant intactId="EBI-50433196">
        <id>A0A6Q8PF08</id>
        <label>PMP22</label>
    </interactant>
    <organismsDiffer>false</organismsDiffer>
    <experiments>3</experiments>
</comment>
<comment type="interaction">
    <interactant intactId="EBI-10261141">
        <id>Q8IUC2</id>
    </interactant>
    <interactant intactId="EBI-1389308">
        <id>Q7Z3K3</id>
        <label>POGZ</label>
    </interactant>
    <organismsDiffer>false</organismsDiffer>
    <experiments>5</experiments>
</comment>
<comment type="interaction">
    <interactant intactId="EBI-10261141">
        <id>Q8IUC2</id>
    </interactant>
    <interactant intactId="EBI-12029004">
        <id>P78424</id>
        <label>POU6F2</label>
    </interactant>
    <organismsDiffer>false</organismsDiffer>
    <experiments>3</experiments>
</comment>
<comment type="interaction">
    <interactant intactId="EBI-10261141">
        <id>Q8IUC2</id>
    </interactant>
    <interactant intactId="EBI-9027467">
        <id>O75360</id>
        <label>PROP1</label>
    </interactant>
    <organismsDiffer>false</organismsDiffer>
    <experiments>3</experiments>
</comment>
<comment type="interaction">
    <interactant intactId="EBI-10261141">
        <id>Q8IUC2</id>
    </interactant>
    <interactant intactId="EBI-740924">
        <id>Q9NZ81</id>
        <label>PRR13</label>
    </interactant>
    <organismsDiffer>false</organismsDiffer>
    <experiments>3</experiments>
</comment>
<comment type="interaction">
    <interactant intactId="EBI-10261141">
        <id>Q8IUC2</id>
    </interactant>
    <interactant intactId="EBI-11986293">
        <id>P0CG20</id>
        <label>PRR35</label>
    </interactant>
    <organismsDiffer>false</organismsDiffer>
    <experiments>3</experiments>
</comment>
<comment type="interaction">
    <interactant intactId="EBI-10261141">
        <id>Q8IUC2</id>
    </interactant>
    <interactant intactId="EBI-348380">
        <id>P25788</id>
        <label>PSMA3</label>
    </interactant>
    <organismsDiffer>false</organismsDiffer>
    <experiments>3</experiments>
</comment>
<comment type="interaction">
    <interactant intactId="EBI-10261141">
        <id>Q8IUC2</id>
    </interactant>
    <interactant intactId="EBI-744023">
        <id>Q9BTL3</id>
        <label>RAMAC</label>
    </interactant>
    <organismsDiffer>false</organismsDiffer>
    <experiments>3</experiments>
</comment>
<comment type="interaction">
    <interactant intactId="EBI-10261141">
        <id>Q8IUC2</id>
    </interactant>
    <interactant intactId="EBI-740322">
        <id>Q93062</id>
        <label>RBPMS</label>
    </interactant>
    <organismsDiffer>false</organismsDiffer>
    <experiments>3</experiments>
</comment>
<comment type="interaction">
    <interactant intactId="EBI-10261141">
        <id>Q8IUC2</id>
    </interactant>
    <interactant intactId="EBI-11987469">
        <id>Q6ZRY4</id>
        <label>RBPMS2</label>
    </interactant>
    <organismsDiffer>false</organismsDiffer>
    <experiments>5</experiments>
</comment>
<comment type="interaction">
    <interactant intactId="EBI-10261141">
        <id>Q8IUC2</id>
    </interactant>
    <interactant intactId="EBI-396669">
        <id>Q9Y3C5</id>
        <label>RNF11</label>
    </interactant>
    <organismsDiffer>false</organismsDiffer>
    <experiments>3</experiments>
</comment>
<comment type="interaction">
    <interactant intactId="EBI-10261141">
        <id>Q8IUC2</id>
    </interactant>
    <interactant intactId="EBI-2341200">
        <id>Q9H0F5</id>
        <label>RNF38</label>
    </interactant>
    <organismsDiffer>false</organismsDiffer>
    <experiments>3</experiments>
</comment>
<comment type="interaction">
    <interactant intactId="EBI-10261141">
        <id>Q8IUC2</id>
    </interactant>
    <interactant intactId="EBI-6257312">
        <id>Q9BVN2</id>
        <label>RUSC1</label>
    </interactant>
    <organismsDiffer>false</organismsDiffer>
    <experiments>3</experiments>
</comment>
<comment type="interaction">
    <interactant intactId="EBI-10261141">
        <id>Q8IUC2</id>
    </interactant>
    <interactant intactId="EBI-12000762">
        <id>Q7Z5V6-2</id>
        <label>SAXO4</label>
    </interactant>
    <organismsDiffer>false</organismsDiffer>
    <experiments>3</experiments>
</comment>
<comment type="interaction">
    <interactant intactId="EBI-10261141">
        <id>Q8IUC2</id>
    </interactant>
    <interactant intactId="EBI-395421">
        <id>Q16637</id>
        <label>SMN2</label>
    </interactant>
    <organismsDiffer>false</organismsDiffer>
    <experiments>3</experiments>
</comment>
<comment type="interaction">
    <interactant intactId="EBI-10261141">
        <id>Q8IUC2</id>
    </interactant>
    <interactant intactId="EBI-12067698">
        <id>Q99954</id>
        <label>SMR3A</label>
    </interactant>
    <organismsDiffer>false</organismsDiffer>
    <experiments>3</experiments>
</comment>
<comment type="interaction">
    <interactant intactId="EBI-10261141">
        <id>Q8IUC2</id>
    </interactant>
    <interactant intactId="EBI-12275818">
        <id>Q53HV7-2</id>
        <label>SMUG1</label>
    </interactant>
    <organismsDiffer>false</organismsDiffer>
    <experiments>3</experiments>
</comment>
<comment type="interaction">
    <interactant intactId="EBI-10261141">
        <id>Q8IUC2</id>
    </interactant>
    <interactant intactId="EBI-766589">
        <id>P09234</id>
        <label>SNRPC</label>
    </interactant>
    <organismsDiffer>false</organismsDiffer>
    <experiments>3</experiments>
</comment>
<comment type="interaction">
    <interactant intactId="EBI-10261141">
        <id>Q8IUC2</id>
    </interactant>
    <interactant intactId="EBI-12085364">
        <id>O95935</id>
        <label>TBX18</label>
    </interactant>
    <organismsDiffer>false</organismsDiffer>
    <experiments>3</experiments>
</comment>
<comment type="interaction">
    <interactant intactId="EBI-10261141">
        <id>Q8IUC2</id>
    </interactant>
    <interactant intactId="EBI-8644516">
        <id>Q9BXF9</id>
        <label>TEKT3</label>
    </interactant>
    <organismsDiffer>false</organismsDiffer>
    <experiments>3</experiments>
</comment>
<comment type="interaction">
    <interactant intactId="EBI-10261141">
        <id>Q8IUC2</id>
    </interactant>
    <interactant intactId="EBI-11064654">
        <id>Q01085-2</id>
        <label>TIAL1</label>
    </interactant>
    <organismsDiffer>false</organismsDiffer>
    <experiments>3</experiments>
</comment>
<comment type="interaction">
    <interactant intactId="EBI-10261141">
        <id>Q8IUC2</id>
    </interactant>
    <interactant intactId="EBI-11741437">
        <id>Q08117-2</id>
        <label>TLE5</label>
    </interactant>
    <organismsDiffer>false</organismsDiffer>
    <experiments>3</experiments>
</comment>
<comment type="interaction">
    <interactant intactId="EBI-10261141">
        <id>Q8IUC2</id>
    </interactant>
    <interactant intactId="EBI-3939165">
        <id>O43711</id>
        <label>TLX3</label>
    </interactant>
    <organismsDiffer>false</organismsDiffer>
    <experiments>3</experiments>
</comment>
<comment type="interaction">
    <interactant intactId="EBI-10261141">
        <id>Q8IUC2</id>
    </interactant>
    <interactant intactId="EBI-712598">
        <id>P62328</id>
        <label>TMSB4X</label>
    </interactant>
    <organismsDiffer>false</organismsDiffer>
    <experiments>3</experiments>
</comment>
<comment type="interaction">
    <interactant intactId="EBI-10261141">
        <id>Q8IUC2</id>
    </interactant>
    <interactant intactId="EBI-357849">
        <id>Q15025</id>
        <label>TNIP1</label>
    </interactant>
    <organismsDiffer>false</organismsDiffer>
    <experiments>3</experiments>
</comment>
<comment type="interaction">
    <interactant intactId="EBI-10261141">
        <id>Q8IUC2</id>
    </interactant>
    <interactant intactId="EBI-12076664">
        <id>O14787-2</id>
        <label>TNPO2</label>
    </interactant>
    <organismsDiffer>false</organismsDiffer>
    <experiments>3</experiments>
</comment>
<comment type="interaction">
    <interactant intactId="EBI-10261141">
        <id>Q8IUC2</id>
    </interactant>
    <interactant intactId="EBI-12023322">
        <id>Q8N831</id>
        <label>TSPYL6</label>
    </interactant>
    <organismsDiffer>false</organismsDiffer>
    <experiments>3</experiments>
</comment>
<comment type="interaction">
    <interactant intactId="EBI-10261141">
        <id>Q8IUC2</id>
    </interactant>
    <interactant intactId="EBI-741480">
        <id>Q9UMX0</id>
        <label>UBQLN1</label>
    </interactant>
    <organismsDiffer>false</organismsDiffer>
    <experiments>3</experiments>
</comment>
<comment type="interaction">
    <interactant intactId="EBI-10261141">
        <id>Q8IUC2</id>
    </interactant>
    <interactant intactId="EBI-10191303">
        <id>O95231</id>
        <label>VENTX</label>
    </interactant>
    <organismsDiffer>false</organismsDiffer>
    <experiments>3</experiments>
</comment>
<comment type="interaction">
    <interactant intactId="EBI-10261141">
        <id>Q8IUC2</id>
    </interactant>
    <interactant intactId="EBI-11980193">
        <id>Q14119</id>
        <label>VEZF1</label>
    </interactant>
    <organismsDiffer>false</organismsDiffer>
    <experiments>3</experiments>
</comment>
<comment type="interaction">
    <interactant intactId="EBI-10261141">
        <id>Q8IUC2</id>
    </interactant>
    <interactant intactId="EBI-720609">
        <id>O76024</id>
        <label>WFS1</label>
    </interactant>
    <organismsDiffer>false</organismsDiffer>
    <experiments>3</experiments>
</comment>
<comment type="interaction">
    <interactant intactId="EBI-10261141">
        <id>Q8IUC2</id>
    </interactant>
    <interactant intactId="EBI-1051237">
        <id>Q9BYJ9</id>
        <label>YTHDF1</label>
    </interactant>
    <organismsDiffer>false</organismsDiffer>
    <experiments>3</experiments>
</comment>
<comment type="interaction">
    <interactant intactId="EBI-10261141">
        <id>Q8IUC2</id>
    </interactant>
    <interactant intactId="EBI-10188476">
        <id>A0A0C4DGF1</id>
        <label>ZBTB32</label>
    </interactant>
    <organismsDiffer>false</organismsDiffer>
    <experiments>3</experiments>
</comment>
<comment type="interaction">
    <interactant intactId="EBI-10261141">
        <id>Q8IUC2</id>
    </interactant>
    <interactant intactId="EBI-742550">
        <id>Q96K80</id>
        <label>ZC3H10</label>
    </interactant>
    <organismsDiffer>false</organismsDiffer>
    <experiments>3</experiments>
</comment>
<comment type="interaction">
    <interactant intactId="EBI-10261141">
        <id>Q8IUC2</id>
    </interactant>
    <interactant intactId="EBI-11963196">
        <id>Q15915</id>
        <label>ZIC1</label>
    </interactant>
    <organismsDiffer>false</organismsDiffer>
    <experiments>5</experiments>
</comment>
<comment type="tissue specificity">
    <text>Is essentially restricted to only one vertical half of the hair forming compartment and in beard hairs is absent from the central medulla.</text>
</comment>
<comment type="similarity">
    <text evidence="1">Belongs to the KRTAP type 8 family.</text>
</comment>
<proteinExistence type="evidence at protein level"/>
<accession>Q8IUC2</accession>
<accession>Q3LI57</accession>
<feature type="chain" id="PRO_0000185185" description="Keratin-associated protein 8-1">
    <location>
        <begin position="1"/>
        <end position="63"/>
    </location>
</feature>
<feature type="region of interest" description="12 X 2 AA repeats of G-[YCGS]">
    <location>
        <begin position="12"/>
        <end position="54"/>
    </location>
</feature>
<keyword id="KW-0416">Keratin</keyword>
<keyword id="KW-1185">Reference proteome</keyword>
<keyword id="KW-0677">Repeat</keyword>
<evidence type="ECO:0000305" key="1"/>
<name>KRA81_HUMAN</name>
<dbReference type="EMBL" id="AJ457064">
    <property type="protein sequence ID" value="CAD29720.1"/>
    <property type="molecule type" value="mRNA"/>
</dbReference>
<dbReference type="EMBL" id="AB096961">
    <property type="protein sequence ID" value="BAE46376.1"/>
    <property type="molecule type" value="mRNA"/>
</dbReference>
<dbReference type="EMBL" id="AP000244">
    <property type="status" value="NOT_ANNOTATED_CDS"/>
    <property type="molecule type" value="Genomic_DNA"/>
</dbReference>
<dbReference type="EMBL" id="CH471079">
    <property type="protein sequence ID" value="EAX09896.1"/>
    <property type="molecule type" value="Genomic_DNA"/>
</dbReference>
<dbReference type="EMBL" id="BC130397">
    <property type="protein sequence ID" value="AAI30398.1"/>
    <property type="molecule type" value="mRNA"/>
</dbReference>
<dbReference type="EMBL" id="BC133033">
    <property type="protein sequence ID" value="AAI33034.1"/>
    <property type="molecule type" value="mRNA"/>
</dbReference>
<dbReference type="CCDS" id="CCDS13607.1"/>
<dbReference type="RefSeq" id="NP_787053.1">
    <property type="nucleotide sequence ID" value="NM_175857.4"/>
</dbReference>
<dbReference type="BioGRID" id="130625">
    <property type="interactions" value="79"/>
</dbReference>
<dbReference type="FunCoup" id="Q8IUC2">
    <property type="interactions" value="30"/>
</dbReference>
<dbReference type="IntAct" id="Q8IUC2">
    <property type="interactions" value="97"/>
</dbReference>
<dbReference type="STRING" id="9606.ENSP00000332805"/>
<dbReference type="BioMuta" id="KRTAP8-1"/>
<dbReference type="DMDM" id="32363185"/>
<dbReference type="MassIVE" id="Q8IUC2"/>
<dbReference type="PaxDb" id="9606-ENSP00000332805"/>
<dbReference type="PeptideAtlas" id="Q8IUC2"/>
<dbReference type="Antibodypedia" id="6687">
    <property type="antibodies" value="47 antibodies from 13 providers"/>
</dbReference>
<dbReference type="DNASU" id="337879"/>
<dbReference type="Ensembl" id="ENST00000329621.6">
    <property type="protein sequence ID" value="ENSP00000332805.4"/>
    <property type="gene ID" value="ENSG00000183640.6"/>
</dbReference>
<dbReference type="GeneID" id="337879"/>
<dbReference type="KEGG" id="hsa:337879"/>
<dbReference type="MANE-Select" id="ENST00000329621.6">
    <property type="protein sequence ID" value="ENSP00000332805.4"/>
    <property type="RefSeq nucleotide sequence ID" value="NM_175857.4"/>
    <property type="RefSeq protein sequence ID" value="NP_787053.1"/>
</dbReference>
<dbReference type="UCSC" id="uc002you.3">
    <property type="organism name" value="human"/>
</dbReference>
<dbReference type="AGR" id="HGNC:18935"/>
<dbReference type="CTD" id="337879"/>
<dbReference type="GeneCards" id="KRTAP8-1"/>
<dbReference type="HGNC" id="HGNC:18935">
    <property type="gene designation" value="KRTAP8-1"/>
</dbReference>
<dbReference type="HPA" id="ENSG00000183640">
    <property type="expression patterns" value="Tissue enriched (skin)"/>
</dbReference>
<dbReference type="neXtProt" id="NX_Q8IUC2"/>
<dbReference type="PharmGKB" id="PA134918132"/>
<dbReference type="VEuPathDB" id="HostDB:ENSG00000183640"/>
<dbReference type="eggNOG" id="ENOG502SW61">
    <property type="taxonomic scope" value="Eukaryota"/>
</dbReference>
<dbReference type="GeneTree" id="ENSGT00530000064274"/>
<dbReference type="HOGENOM" id="CLU_3019710_0_0_1"/>
<dbReference type="InParanoid" id="Q8IUC2"/>
<dbReference type="OMA" id="RRYWPYA"/>
<dbReference type="OrthoDB" id="9449428at2759"/>
<dbReference type="PAN-GO" id="Q8IUC2">
    <property type="GO annotations" value="0 GO annotations based on evolutionary models"/>
</dbReference>
<dbReference type="PhylomeDB" id="Q8IUC2"/>
<dbReference type="TreeFam" id="TF338337"/>
<dbReference type="PathwayCommons" id="Q8IUC2"/>
<dbReference type="Reactome" id="R-HSA-6805567">
    <property type="pathway name" value="Keratinization"/>
</dbReference>
<dbReference type="SignaLink" id="Q8IUC2"/>
<dbReference type="BioGRID-ORCS" id="337879">
    <property type="hits" value="13 hits in 1136 CRISPR screens"/>
</dbReference>
<dbReference type="GenomeRNAi" id="337879"/>
<dbReference type="Pharos" id="Q8IUC2">
    <property type="development level" value="Tbio"/>
</dbReference>
<dbReference type="PRO" id="PR:Q8IUC2"/>
<dbReference type="Proteomes" id="UP000005640">
    <property type="component" value="Chromosome 21"/>
</dbReference>
<dbReference type="RNAct" id="Q8IUC2">
    <property type="molecule type" value="protein"/>
</dbReference>
<dbReference type="Bgee" id="ENSG00000183640">
    <property type="expression patterns" value="Expressed in upper leg skin and 51 other cell types or tissues"/>
</dbReference>
<dbReference type="GO" id="GO:0005829">
    <property type="term" value="C:cytosol"/>
    <property type="evidence" value="ECO:0000304"/>
    <property type="project" value="Reactome"/>
</dbReference>
<dbReference type="GO" id="GO:0005882">
    <property type="term" value="C:intermediate filament"/>
    <property type="evidence" value="ECO:0007669"/>
    <property type="project" value="UniProtKB-KW"/>
</dbReference>
<dbReference type="InterPro" id="IPR039351">
    <property type="entry name" value="KRTAP8-1"/>
</dbReference>
<dbReference type="InterPro" id="IPR021743">
    <property type="entry name" value="KRTAP_type8/19/20/21/22"/>
</dbReference>
<dbReference type="PANTHER" id="PTHR36131">
    <property type="entry name" value="KERATIN-ASSOCIATED PROTEIN 8-1"/>
    <property type="match status" value="1"/>
</dbReference>
<dbReference type="PANTHER" id="PTHR36131:SF1">
    <property type="entry name" value="KERATIN-ASSOCIATED PROTEIN 8-1"/>
    <property type="match status" value="1"/>
</dbReference>
<dbReference type="Pfam" id="PF11759">
    <property type="entry name" value="KRTAP"/>
    <property type="match status" value="1"/>
</dbReference>
<reference key="1">
    <citation type="journal article" date="2002" name="J. Biol. Chem.">
        <title>Characterization of a first domain of human high glycine-tyrosine and high sulfur keratin-associated protein (KAP) genes on chromosome 21q22.1.</title>
        <authorList>
            <person name="Rogers M.A."/>
            <person name="Langbein L."/>
            <person name="Winter H."/>
            <person name="Ehmann C."/>
            <person name="Praetzel S."/>
            <person name="Schweizer J."/>
        </authorList>
    </citation>
    <scope>NUCLEOTIDE SEQUENCE [MRNA]</scope>
    <source>
        <tissue>Scalp</tissue>
    </source>
</reference>
<reference key="2">
    <citation type="journal article" date="2004" name="Genomics">
        <title>A cluster of 21 keratin-associated protein genes within introns of another gene on human chromosome 21q22.3.</title>
        <authorList>
            <person name="Shibuya K."/>
            <person name="Obayashi I."/>
            <person name="Asakawa S."/>
            <person name="Minoshima S."/>
            <person name="Kudoh J."/>
            <person name="Shimizu N."/>
        </authorList>
    </citation>
    <scope>NUCLEOTIDE SEQUENCE [MRNA]</scope>
    <source>
        <tissue>Hair root</tissue>
    </source>
</reference>
<reference key="3">
    <citation type="journal article" date="2000" name="Nature">
        <title>The DNA sequence of human chromosome 21.</title>
        <authorList>
            <person name="Hattori M."/>
            <person name="Fujiyama A."/>
            <person name="Taylor T.D."/>
            <person name="Watanabe H."/>
            <person name="Yada T."/>
            <person name="Park H.-S."/>
            <person name="Toyoda A."/>
            <person name="Ishii K."/>
            <person name="Totoki Y."/>
            <person name="Choi D.-K."/>
            <person name="Groner Y."/>
            <person name="Soeda E."/>
            <person name="Ohki M."/>
            <person name="Takagi T."/>
            <person name="Sakaki Y."/>
            <person name="Taudien S."/>
            <person name="Blechschmidt K."/>
            <person name="Polley A."/>
            <person name="Menzel U."/>
            <person name="Delabar J."/>
            <person name="Kumpf K."/>
            <person name="Lehmann R."/>
            <person name="Patterson D."/>
            <person name="Reichwald K."/>
            <person name="Rump A."/>
            <person name="Schillhabel M."/>
            <person name="Schudy A."/>
            <person name="Zimmermann W."/>
            <person name="Rosenthal A."/>
            <person name="Kudoh J."/>
            <person name="Shibuya K."/>
            <person name="Kawasaki K."/>
            <person name="Asakawa S."/>
            <person name="Shintani A."/>
            <person name="Sasaki T."/>
            <person name="Nagamine K."/>
            <person name="Mitsuyama S."/>
            <person name="Antonarakis S.E."/>
            <person name="Minoshima S."/>
            <person name="Shimizu N."/>
            <person name="Nordsiek G."/>
            <person name="Hornischer K."/>
            <person name="Brandt P."/>
            <person name="Scharfe M."/>
            <person name="Schoen O."/>
            <person name="Desario A."/>
            <person name="Reichelt J."/>
            <person name="Kauer G."/>
            <person name="Bloecker H."/>
            <person name="Ramser J."/>
            <person name="Beck A."/>
            <person name="Klages S."/>
            <person name="Hennig S."/>
            <person name="Riesselmann L."/>
            <person name="Dagand E."/>
            <person name="Wehrmeyer S."/>
            <person name="Borzym K."/>
            <person name="Gardiner K."/>
            <person name="Nizetic D."/>
            <person name="Francis F."/>
            <person name="Lehrach H."/>
            <person name="Reinhardt R."/>
            <person name="Yaspo M.-L."/>
        </authorList>
    </citation>
    <scope>NUCLEOTIDE SEQUENCE [LARGE SCALE GENOMIC DNA]</scope>
</reference>
<reference key="4">
    <citation type="submission" date="2005-09" db="EMBL/GenBank/DDBJ databases">
        <authorList>
            <person name="Mural R.J."/>
            <person name="Istrail S."/>
            <person name="Sutton G.G."/>
            <person name="Florea L."/>
            <person name="Halpern A.L."/>
            <person name="Mobarry C.M."/>
            <person name="Lippert R."/>
            <person name="Walenz B."/>
            <person name="Shatkay H."/>
            <person name="Dew I."/>
            <person name="Miller J.R."/>
            <person name="Flanigan M.J."/>
            <person name="Edwards N.J."/>
            <person name="Bolanos R."/>
            <person name="Fasulo D."/>
            <person name="Halldorsson B.V."/>
            <person name="Hannenhalli S."/>
            <person name="Turner R."/>
            <person name="Yooseph S."/>
            <person name="Lu F."/>
            <person name="Nusskern D.R."/>
            <person name="Shue B.C."/>
            <person name="Zheng X.H."/>
            <person name="Zhong F."/>
            <person name="Delcher A.L."/>
            <person name="Huson D.H."/>
            <person name="Kravitz S.A."/>
            <person name="Mouchard L."/>
            <person name="Reinert K."/>
            <person name="Remington K.A."/>
            <person name="Clark A.G."/>
            <person name="Waterman M.S."/>
            <person name="Eichler E.E."/>
            <person name="Adams M.D."/>
            <person name="Hunkapiller M.W."/>
            <person name="Myers E.W."/>
            <person name="Venter J.C."/>
        </authorList>
    </citation>
    <scope>NUCLEOTIDE SEQUENCE [LARGE SCALE GENOMIC DNA]</scope>
</reference>
<reference key="5">
    <citation type="journal article" date="2004" name="Genome Res.">
        <title>The status, quality, and expansion of the NIH full-length cDNA project: the Mammalian Gene Collection (MGC).</title>
        <authorList>
            <consortium name="The MGC Project Team"/>
        </authorList>
    </citation>
    <scope>NUCLEOTIDE SEQUENCE [LARGE SCALE MRNA]</scope>
</reference>